<reference key="1">
    <citation type="submission" date="2007-10" db="EMBL/GenBank/DDBJ databases">
        <title>Brucella canis ATCC 23365 whole genome shotgun sequencing project.</title>
        <authorList>
            <person name="Setubal J.C."/>
            <person name="Bowns C."/>
            <person name="Boyle S."/>
            <person name="Crasta O.R."/>
            <person name="Czar M.J."/>
            <person name="Dharmanolla C."/>
            <person name="Gillespie J.J."/>
            <person name="Kenyon R.W."/>
            <person name="Lu J."/>
            <person name="Mane S."/>
            <person name="Mohapatra S."/>
            <person name="Nagrani S."/>
            <person name="Purkayastha A."/>
            <person name="Rajasimha H.K."/>
            <person name="Shallom J.M."/>
            <person name="Shallom S."/>
            <person name="Shukla M."/>
            <person name="Snyder E.E."/>
            <person name="Sobral B.W."/>
            <person name="Wattam A.R."/>
            <person name="Will R."/>
            <person name="Williams K."/>
            <person name="Yoo H."/>
            <person name="Bruce D."/>
            <person name="Detter C."/>
            <person name="Munk C."/>
            <person name="Brettin T.S."/>
        </authorList>
    </citation>
    <scope>NUCLEOTIDE SEQUENCE [LARGE SCALE GENOMIC DNA]</scope>
    <source>
        <strain>ATCC 23365 / NCTC 10854 / RM-666</strain>
    </source>
</reference>
<organism>
    <name type="scientific">Brucella canis (strain ATCC 23365 / NCTC 10854 / RM-666)</name>
    <dbReference type="NCBI Taxonomy" id="483179"/>
    <lineage>
        <taxon>Bacteria</taxon>
        <taxon>Pseudomonadati</taxon>
        <taxon>Pseudomonadota</taxon>
        <taxon>Alphaproteobacteria</taxon>
        <taxon>Hyphomicrobiales</taxon>
        <taxon>Brucellaceae</taxon>
        <taxon>Brucella/Ochrobactrum group</taxon>
        <taxon>Brucella</taxon>
    </lineage>
</organism>
<name>Y3429_BRUC2</name>
<evidence type="ECO:0000255" key="1">
    <source>
        <dbReference type="HAMAP-Rule" id="MF_01240"/>
    </source>
</evidence>
<proteinExistence type="inferred from homology"/>
<accession>A9MCJ0</accession>
<dbReference type="EMBL" id="CP000873">
    <property type="protein sequence ID" value="ABX64077.1"/>
    <property type="molecule type" value="Genomic_DNA"/>
</dbReference>
<dbReference type="RefSeq" id="WP_004682301.1">
    <property type="nucleotide sequence ID" value="NC_010104.1"/>
</dbReference>
<dbReference type="SMR" id="A9MCJ0"/>
<dbReference type="KEGG" id="bcs:BCAN_B0929"/>
<dbReference type="HOGENOM" id="CLU_089975_0_0_5"/>
<dbReference type="PhylomeDB" id="A9MCJ0"/>
<dbReference type="Proteomes" id="UP000001385">
    <property type="component" value="Chromosome II"/>
</dbReference>
<dbReference type="GO" id="GO:0097367">
    <property type="term" value="F:carbohydrate derivative binding"/>
    <property type="evidence" value="ECO:0007669"/>
    <property type="project" value="InterPro"/>
</dbReference>
<dbReference type="GO" id="GO:1901135">
    <property type="term" value="P:carbohydrate derivative metabolic process"/>
    <property type="evidence" value="ECO:0007669"/>
    <property type="project" value="InterPro"/>
</dbReference>
<dbReference type="CDD" id="cd05013">
    <property type="entry name" value="SIS_RpiR"/>
    <property type="match status" value="1"/>
</dbReference>
<dbReference type="Gene3D" id="3.40.50.10490">
    <property type="entry name" value="Glucose-6-phosphate isomerase like protein, domain 1"/>
    <property type="match status" value="1"/>
</dbReference>
<dbReference type="HAMAP" id="MF_01240">
    <property type="entry name" value="UPF0309"/>
    <property type="match status" value="1"/>
</dbReference>
<dbReference type="InterPro" id="IPR035472">
    <property type="entry name" value="RpiR-like_SIS"/>
</dbReference>
<dbReference type="InterPro" id="IPR001347">
    <property type="entry name" value="SIS_dom"/>
</dbReference>
<dbReference type="InterPro" id="IPR046348">
    <property type="entry name" value="SIS_dom_sf"/>
</dbReference>
<dbReference type="InterPro" id="IPR050099">
    <property type="entry name" value="SIS_GmhA/DiaA_subfam"/>
</dbReference>
<dbReference type="InterPro" id="IPR022951">
    <property type="entry name" value="UPF0309"/>
</dbReference>
<dbReference type="NCBIfam" id="NF002805">
    <property type="entry name" value="PRK02947.1"/>
    <property type="match status" value="1"/>
</dbReference>
<dbReference type="PANTHER" id="PTHR30390:SF7">
    <property type="entry name" value="PHOSPHOHEPTOSE ISOMERASE"/>
    <property type="match status" value="1"/>
</dbReference>
<dbReference type="PANTHER" id="PTHR30390">
    <property type="entry name" value="SEDOHEPTULOSE 7-PHOSPHATE ISOMERASE / DNAA INITIATOR-ASSOCIATING FACTOR FOR REPLICATION INITIATION"/>
    <property type="match status" value="1"/>
</dbReference>
<dbReference type="Pfam" id="PF13580">
    <property type="entry name" value="SIS_2"/>
    <property type="match status" value="1"/>
</dbReference>
<dbReference type="SUPFAM" id="SSF53697">
    <property type="entry name" value="SIS domain"/>
    <property type="match status" value="1"/>
</dbReference>
<dbReference type="PROSITE" id="PS51464">
    <property type="entry name" value="SIS"/>
    <property type="match status" value="1"/>
</dbReference>
<feature type="chain" id="PRO_1000085743" description="UPF0309 protein BCAN_B0929">
    <location>
        <begin position="1"/>
        <end position="242"/>
    </location>
</feature>
<feature type="domain" description="SIS" evidence="1">
    <location>
        <begin position="30"/>
        <end position="214"/>
    </location>
</feature>
<gene>
    <name type="ordered locus">BCAN_B0929</name>
</gene>
<sequence>MTEITDRYFNDVIARLSGLRDRLAAQMEKAADLIAAAARADRRVYVFGTGHSHMMAEELHYRAGGLAITVPILCGSIMLQDGAVASSHFERIEGAVRPILDRYGIRDGDVLVVVSNSGVNAAPIEAARYAREKGAAIIALTSVAYSNTIARGRTQLLSLADVVLDNDAPSGDAVLEIAGSALKVGPVSTALGVTILNAVFADVAARLVGEGDAPIYLSANMPGSGDINRSLVERYRDRNPHL</sequence>
<keyword id="KW-1185">Reference proteome</keyword>
<protein>
    <recommendedName>
        <fullName evidence="1">UPF0309 protein BCAN_B0929</fullName>
    </recommendedName>
</protein>
<comment type="similarity">
    <text evidence="1">Belongs to the UPF0309 family.</text>
</comment>